<organism>
    <name type="scientific">Klebsiella pneumoniae subsp. pneumoniae (strain ATCC 700721 / MGH 78578)</name>
    <dbReference type="NCBI Taxonomy" id="272620"/>
    <lineage>
        <taxon>Bacteria</taxon>
        <taxon>Pseudomonadati</taxon>
        <taxon>Pseudomonadota</taxon>
        <taxon>Gammaproteobacteria</taxon>
        <taxon>Enterobacterales</taxon>
        <taxon>Enterobacteriaceae</taxon>
        <taxon>Klebsiella/Raoultella group</taxon>
        <taxon>Klebsiella</taxon>
        <taxon>Klebsiella pneumoniae complex</taxon>
    </lineage>
</organism>
<evidence type="ECO:0000255" key="1">
    <source>
        <dbReference type="HAMAP-Rule" id="MF_01432"/>
    </source>
</evidence>
<comment type="function">
    <text evidence="1">Hydrolyzes both purine and pyrimidine ribonucleosides with a broad-substrate specificity.</text>
</comment>
<comment type="similarity">
    <text evidence="1">Belongs to the IUNH family. RihC subfamily.</text>
</comment>
<reference key="1">
    <citation type="submission" date="2006-09" db="EMBL/GenBank/DDBJ databases">
        <authorList>
            <consortium name="The Klebsiella pneumonia Genome Sequencing Project"/>
            <person name="McClelland M."/>
            <person name="Sanderson E.K."/>
            <person name="Spieth J."/>
            <person name="Clifton W.S."/>
            <person name="Latreille P."/>
            <person name="Sabo A."/>
            <person name="Pepin K."/>
            <person name="Bhonagiri V."/>
            <person name="Porwollik S."/>
            <person name="Ali J."/>
            <person name="Wilson R.K."/>
        </authorList>
    </citation>
    <scope>NUCLEOTIDE SEQUENCE [LARGE SCALE GENOMIC DNA]</scope>
    <source>
        <strain>ATCC 700721 / MGH 78578</strain>
    </source>
</reference>
<feature type="chain" id="PRO_1000024407" description="Non-specific ribonucleoside hydrolase RihC">
    <location>
        <begin position="1"/>
        <end position="304"/>
    </location>
</feature>
<feature type="active site" evidence="1">
    <location>
        <position position="233"/>
    </location>
</feature>
<dbReference type="EC" id="3.2.-.-" evidence="1"/>
<dbReference type="EMBL" id="CP000647">
    <property type="protein sequence ID" value="ABR75485.1"/>
    <property type="molecule type" value="Genomic_DNA"/>
</dbReference>
<dbReference type="RefSeq" id="WP_002887981.1">
    <property type="nucleotide sequence ID" value="NC_009648.1"/>
</dbReference>
<dbReference type="SMR" id="A6T4G4"/>
<dbReference type="STRING" id="272620.KPN_00025"/>
<dbReference type="jPOST" id="A6T4G4"/>
<dbReference type="PaxDb" id="272620-KPN_00025"/>
<dbReference type="EnsemblBacteria" id="ABR75485">
    <property type="protein sequence ID" value="ABR75485"/>
    <property type="gene ID" value="KPN_00025"/>
</dbReference>
<dbReference type="KEGG" id="kpn:KPN_00025"/>
<dbReference type="HOGENOM" id="CLU_036838_2_2_6"/>
<dbReference type="Proteomes" id="UP000000265">
    <property type="component" value="Chromosome"/>
</dbReference>
<dbReference type="GO" id="GO:0005829">
    <property type="term" value="C:cytosol"/>
    <property type="evidence" value="ECO:0007669"/>
    <property type="project" value="TreeGrafter"/>
</dbReference>
<dbReference type="GO" id="GO:0008477">
    <property type="term" value="F:purine nucleosidase activity"/>
    <property type="evidence" value="ECO:0007669"/>
    <property type="project" value="TreeGrafter"/>
</dbReference>
<dbReference type="GO" id="GO:0006144">
    <property type="term" value="P:purine nucleobase metabolic process"/>
    <property type="evidence" value="ECO:0007669"/>
    <property type="project" value="UniProtKB-UniRule"/>
</dbReference>
<dbReference type="GO" id="GO:0006152">
    <property type="term" value="P:purine nucleoside catabolic process"/>
    <property type="evidence" value="ECO:0007669"/>
    <property type="project" value="TreeGrafter"/>
</dbReference>
<dbReference type="GO" id="GO:0006206">
    <property type="term" value="P:pyrimidine nucleobase metabolic process"/>
    <property type="evidence" value="ECO:0007669"/>
    <property type="project" value="UniProtKB-UniRule"/>
</dbReference>
<dbReference type="CDD" id="cd02651">
    <property type="entry name" value="nuc_hydro_IU_UC_XIUA"/>
    <property type="match status" value="1"/>
</dbReference>
<dbReference type="FunFam" id="3.90.245.10:FF:000002">
    <property type="entry name" value="Non-specific ribonucleoside hydrolase RihC"/>
    <property type="match status" value="1"/>
</dbReference>
<dbReference type="Gene3D" id="3.90.245.10">
    <property type="entry name" value="Ribonucleoside hydrolase-like"/>
    <property type="match status" value="1"/>
</dbReference>
<dbReference type="HAMAP" id="MF_01432">
    <property type="entry name" value="Nucleosid_hydro_RihC"/>
    <property type="match status" value="1"/>
</dbReference>
<dbReference type="InterPro" id="IPR001910">
    <property type="entry name" value="Inosine/uridine_hydrolase_dom"/>
</dbReference>
<dbReference type="InterPro" id="IPR023186">
    <property type="entry name" value="IUNH"/>
</dbReference>
<dbReference type="InterPro" id="IPR022976">
    <property type="entry name" value="Nucleosid_hydro_RihC_nonspecif"/>
</dbReference>
<dbReference type="InterPro" id="IPR036452">
    <property type="entry name" value="Ribo_hydro-like"/>
</dbReference>
<dbReference type="NCBIfam" id="NF008036">
    <property type="entry name" value="PRK10768.1"/>
    <property type="match status" value="1"/>
</dbReference>
<dbReference type="PANTHER" id="PTHR12304">
    <property type="entry name" value="INOSINE-URIDINE PREFERRING NUCLEOSIDE HYDROLASE"/>
    <property type="match status" value="1"/>
</dbReference>
<dbReference type="PANTHER" id="PTHR12304:SF15">
    <property type="entry name" value="NON-SPECIFIC RIBONUCLEOSIDE HYDROLASE RIHC"/>
    <property type="match status" value="1"/>
</dbReference>
<dbReference type="Pfam" id="PF01156">
    <property type="entry name" value="IU_nuc_hydro"/>
    <property type="match status" value="1"/>
</dbReference>
<dbReference type="SUPFAM" id="SSF53590">
    <property type="entry name" value="Nucleoside hydrolase"/>
    <property type="match status" value="1"/>
</dbReference>
<proteinExistence type="inferred from homology"/>
<keyword id="KW-0326">Glycosidase</keyword>
<keyword id="KW-0378">Hydrolase</keyword>
<sequence length="304" mass="32675">MRLPIILDTDPGIDDAAAIAAALFAPELDLQLMTTVAGNVSVEKTTRNALQLLHFWNADVPLAQGASMPLVRPLRDAASVHGESGMEGYDFVEHQRQPLAKPAFQAIRDALMHAAEPITLVAIGPLTNIALLLTQYPECVFNIRRLVIMGGSAGRGNFTPNAEFNIAIDPEAAAKVFHSGLEIVMCGLDVTNRALLAADYLATLPTLNQTGKMLHALFSHYRSGSMSSGLRMHDLCAIAWLARPELFTLQPCFVAVETQGTWTAGTTVVDIEGRLGQPANAQVALDIDVEGFQRWAAEVIALAP</sequence>
<protein>
    <recommendedName>
        <fullName evidence="1">Non-specific ribonucleoside hydrolase RihC</fullName>
        <ecNumber evidence="1">3.2.-.-</ecNumber>
    </recommendedName>
    <alternativeName>
        <fullName evidence="1">Purine/pyrimidine ribonucleoside hydrolase</fullName>
    </alternativeName>
</protein>
<gene>
    <name evidence="1" type="primary">rihC</name>
    <name type="ordered locus">KPN78578_00240</name>
    <name type="ORF">KPN_00025</name>
</gene>
<accession>A6T4G4</accession>
<name>RIHC_KLEP7</name>